<feature type="chain" id="PRO_0000111029" description="Oligoribonuclease">
    <location>
        <begin position="1"/>
        <end position="210"/>
    </location>
</feature>
<feature type="domain" description="Exonuclease" evidence="1">
    <location>
        <begin position="12"/>
        <end position="177"/>
    </location>
</feature>
<feature type="active site" evidence="1">
    <location>
        <position position="134"/>
    </location>
</feature>
<keyword id="KW-0963">Cytoplasm</keyword>
<keyword id="KW-0269">Exonuclease</keyword>
<keyword id="KW-0378">Hydrolase</keyword>
<keyword id="KW-0540">Nuclease</keyword>
<keyword id="KW-1185">Reference proteome</keyword>
<organism>
    <name type="scientific">Corynebacterium diphtheriae (strain ATCC 700971 / NCTC 13129 / Biotype gravis)</name>
    <dbReference type="NCBI Taxonomy" id="257309"/>
    <lineage>
        <taxon>Bacteria</taxon>
        <taxon>Bacillati</taxon>
        <taxon>Actinomycetota</taxon>
        <taxon>Actinomycetes</taxon>
        <taxon>Mycobacteriales</taxon>
        <taxon>Corynebacteriaceae</taxon>
        <taxon>Corynebacterium</taxon>
    </lineage>
</organism>
<sequence length="210" mass="23562">MVETVHPKNDRLVWIDLEMTGLELDRHVIVEVAALITDADLNIIGEGVDLVVHATPEQLAEMDDFVTTMHTSSGLLEEIKASTVSLQEAEDAVLALIAQHCDPEHPAPLAGNSIATDRSFIRAQMPRLDKALHYRMVDVSSLKELSRRWAPRVYFNQPDKGMAHRALADIVESIRELDYYRRAWLISDPTTEDAEDAKANATASYQQFLQ</sequence>
<proteinExistence type="inferred from homology"/>
<comment type="function">
    <text evidence="1">3'-to-5' exoribonuclease specific for small oligoribonucleotides.</text>
</comment>
<comment type="subcellular location">
    <subcellularLocation>
        <location evidence="1">Cytoplasm</location>
    </subcellularLocation>
</comment>
<comment type="similarity">
    <text evidence="1">Belongs to the oligoribonuclease family.</text>
</comment>
<gene>
    <name evidence="1" type="primary">orn</name>
    <name type="synonym">ornA</name>
    <name type="ordered locus">DIP1813</name>
</gene>
<name>ORN_CORDI</name>
<accession>P61650</accession>
<dbReference type="EC" id="3.1.15.-" evidence="1"/>
<dbReference type="EMBL" id="BX248359">
    <property type="protein sequence ID" value="CAE50343.1"/>
    <property type="molecule type" value="Genomic_DNA"/>
</dbReference>
<dbReference type="RefSeq" id="WP_010935352.1">
    <property type="nucleotide sequence ID" value="NC_002935.2"/>
</dbReference>
<dbReference type="SMR" id="P61650"/>
<dbReference type="STRING" id="257309.DIP1813"/>
<dbReference type="KEGG" id="cdi:DIP1813"/>
<dbReference type="HOGENOM" id="CLU_064761_3_0_11"/>
<dbReference type="Proteomes" id="UP000002198">
    <property type="component" value="Chromosome"/>
</dbReference>
<dbReference type="GO" id="GO:0005737">
    <property type="term" value="C:cytoplasm"/>
    <property type="evidence" value="ECO:0007669"/>
    <property type="project" value="UniProtKB-SubCell"/>
</dbReference>
<dbReference type="GO" id="GO:0000175">
    <property type="term" value="F:3'-5'-RNA exonuclease activity"/>
    <property type="evidence" value="ECO:0007669"/>
    <property type="project" value="InterPro"/>
</dbReference>
<dbReference type="GO" id="GO:0003676">
    <property type="term" value="F:nucleic acid binding"/>
    <property type="evidence" value="ECO:0007669"/>
    <property type="project" value="InterPro"/>
</dbReference>
<dbReference type="CDD" id="cd06135">
    <property type="entry name" value="Orn"/>
    <property type="match status" value="1"/>
</dbReference>
<dbReference type="FunFam" id="3.30.420.10:FF:000003">
    <property type="entry name" value="Oligoribonuclease"/>
    <property type="match status" value="1"/>
</dbReference>
<dbReference type="Gene3D" id="3.30.420.10">
    <property type="entry name" value="Ribonuclease H-like superfamily/Ribonuclease H"/>
    <property type="match status" value="1"/>
</dbReference>
<dbReference type="HAMAP" id="MF_00045">
    <property type="entry name" value="Oligoribonuclease"/>
    <property type="match status" value="1"/>
</dbReference>
<dbReference type="InterPro" id="IPR013520">
    <property type="entry name" value="Exonuclease_RNaseT/DNA_pol3"/>
</dbReference>
<dbReference type="InterPro" id="IPR022894">
    <property type="entry name" value="Oligoribonuclease"/>
</dbReference>
<dbReference type="InterPro" id="IPR012337">
    <property type="entry name" value="RNaseH-like_sf"/>
</dbReference>
<dbReference type="InterPro" id="IPR036397">
    <property type="entry name" value="RNaseH_sf"/>
</dbReference>
<dbReference type="NCBIfam" id="NF003765">
    <property type="entry name" value="PRK05359.1"/>
    <property type="match status" value="1"/>
</dbReference>
<dbReference type="PANTHER" id="PTHR11046">
    <property type="entry name" value="OLIGORIBONUCLEASE, MITOCHONDRIAL"/>
    <property type="match status" value="1"/>
</dbReference>
<dbReference type="PANTHER" id="PTHR11046:SF0">
    <property type="entry name" value="OLIGORIBONUCLEASE, MITOCHONDRIAL"/>
    <property type="match status" value="1"/>
</dbReference>
<dbReference type="Pfam" id="PF00929">
    <property type="entry name" value="RNase_T"/>
    <property type="match status" value="1"/>
</dbReference>
<dbReference type="SMART" id="SM00479">
    <property type="entry name" value="EXOIII"/>
    <property type="match status" value="1"/>
</dbReference>
<dbReference type="SUPFAM" id="SSF53098">
    <property type="entry name" value="Ribonuclease H-like"/>
    <property type="match status" value="1"/>
</dbReference>
<evidence type="ECO:0000255" key="1">
    <source>
        <dbReference type="HAMAP-Rule" id="MF_00045"/>
    </source>
</evidence>
<protein>
    <recommendedName>
        <fullName evidence="1">Oligoribonuclease</fullName>
        <ecNumber evidence="1">3.1.15.-</ecNumber>
    </recommendedName>
</protein>
<reference key="1">
    <citation type="journal article" date="2003" name="Nucleic Acids Res.">
        <title>The complete genome sequence and analysis of Corynebacterium diphtheriae NCTC13129.</title>
        <authorList>
            <person name="Cerdeno-Tarraga A.-M."/>
            <person name="Efstratiou A."/>
            <person name="Dover L.G."/>
            <person name="Holden M.T.G."/>
            <person name="Pallen M.J."/>
            <person name="Bentley S.D."/>
            <person name="Besra G.S."/>
            <person name="Churcher C.M."/>
            <person name="James K.D."/>
            <person name="De Zoysa A."/>
            <person name="Chillingworth T."/>
            <person name="Cronin A."/>
            <person name="Dowd L."/>
            <person name="Feltwell T."/>
            <person name="Hamlin N."/>
            <person name="Holroyd S."/>
            <person name="Jagels K."/>
            <person name="Moule S."/>
            <person name="Quail M.A."/>
            <person name="Rabbinowitsch E."/>
            <person name="Rutherford K.M."/>
            <person name="Thomson N.R."/>
            <person name="Unwin L."/>
            <person name="Whitehead S."/>
            <person name="Barrell B.G."/>
            <person name="Parkhill J."/>
        </authorList>
    </citation>
    <scope>NUCLEOTIDE SEQUENCE [LARGE SCALE GENOMIC DNA]</scope>
    <source>
        <strain>ATCC 700971 / NCTC 13129 / Biotype gravis</strain>
    </source>
</reference>